<evidence type="ECO:0000305" key="1"/>
<reference key="1">
    <citation type="journal article" date="1997" name="DNA Res.">
        <title>Structural analysis of Arabidopsis thaliana chromosome 5. III. Sequence features of the regions of 1,191,918 bp covered by seventeen physically assigned P1 clones.</title>
        <authorList>
            <person name="Nakamura Y."/>
            <person name="Sato S."/>
            <person name="Kaneko T."/>
            <person name="Kotani H."/>
            <person name="Asamizu E."/>
            <person name="Miyajima N."/>
            <person name="Tabata S."/>
        </authorList>
    </citation>
    <scope>NUCLEOTIDE SEQUENCE [LARGE SCALE GENOMIC DNA]</scope>
    <source>
        <strain>cv. Columbia</strain>
    </source>
</reference>
<reference key="2">
    <citation type="journal article" date="2017" name="Plant J.">
        <title>Araport11: a complete reannotation of the Arabidopsis thaliana reference genome.</title>
        <authorList>
            <person name="Cheng C.Y."/>
            <person name="Krishnakumar V."/>
            <person name="Chan A.P."/>
            <person name="Thibaud-Nissen F."/>
            <person name="Schobel S."/>
            <person name="Town C.D."/>
        </authorList>
    </citation>
    <scope>GENOME REANNOTATION</scope>
    <source>
        <strain>cv. Columbia</strain>
    </source>
</reference>
<comment type="similarity">
    <text evidence="1">Belongs to the GEM family.</text>
</comment>
<keyword id="KW-1185">Reference proteome</keyword>
<organism>
    <name type="scientific">Arabidopsis thaliana</name>
    <name type="common">Mouse-ear cress</name>
    <dbReference type="NCBI Taxonomy" id="3702"/>
    <lineage>
        <taxon>Eukaryota</taxon>
        <taxon>Viridiplantae</taxon>
        <taxon>Streptophyta</taxon>
        <taxon>Embryophyta</taxon>
        <taxon>Tracheophyta</taxon>
        <taxon>Spermatophyta</taxon>
        <taxon>Magnoliopsida</taxon>
        <taxon>eudicotyledons</taxon>
        <taxon>Gunneridae</taxon>
        <taxon>Pentapetalae</taxon>
        <taxon>rosids</taxon>
        <taxon>malvids</taxon>
        <taxon>Brassicales</taxon>
        <taxon>Brassicaceae</taxon>
        <taxon>Camelineae</taxon>
        <taxon>Arabidopsis</taxon>
    </lineage>
</organism>
<gene>
    <name type="ordered locus">At5g23370</name>
    <name type="ORF">MKD15.23</name>
</gene>
<name>GEML8_ARATH</name>
<proteinExistence type="inferred from homology"/>
<dbReference type="EMBL" id="AB007648">
    <property type="protein sequence ID" value="BAB11192.1"/>
    <property type="molecule type" value="Genomic_DNA"/>
</dbReference>
<dbReference type="EMBL" id="CP002688">
    <property type="protein sequence ID" value="AED93156.1"/>
    <property type="molecule type" value="Genomic_DNA"/>
</dbReference>
<dbReference type="RefSeq" id="NP_197728.1">
    <property type="nucleotide sequence ID" value="NM_122243.3"/>
</dbReference>
<dbReference type="FunCoup" id="Q9FMW4">
    <property type="interactions" value="51"/>
</dbReference>
<dbReference type="STRING" id="3702.Q9FMW4"/>
<dbReference type="PaxDb" id="3702-AT5G23370.1"/>
<dbReference type="EnsemblPlants" id="AT5G23370.1">
    <property type="protein sequence ID" value="AT5G23370.1"/>
    <property type="gene ID" value="AT5G23370"/>
</dbReference>
<dbReference type="GeneID" id="832401"/>
<dbReference type="Gramene" id="AT5G23370.1">
    <property type="protein sequence ID" value="AT5G23370.1"/>
    <property type="gene ID" value="AT5G23370"/>
</dbReference>
<dbReference type="KEGG" id="ath:AT5G23370"/>
<dbReference type="Araport" id="AT5G23370"/>
<dbReference type="TAIR" id="AT5G23370"/>
<dbReference type="eggNOG" id="ENOG502QUKI">
    <property type="taxonomic scope" value="Eukaryota"/>
</dbReference>
<dbReference type="HOGENOM" id="CLU_063785_0_1_1"/>
<dbReference type="InParanoid" id="Q9FMW4"/>
<dbReference type="OMA" id="FRVYNEE"/>
<dbReference type="PhylomeDB" id="Q9FMW4"/>
<dbReference type="PRO" id="PR:Q9FMW4"/>
<dbReference type="Proteomes" id="UP000006548">
    <property type="component" value="Chromosome 5"/>
</dbReference>
<dbReference type="ExpressionAtlas" id="Q9FMW4">
    <property type="expression patterns" value="baseline and differential"/>
</dbReference>
<dbReference type="CDD" id="cd13222">
    <property type="entry name" value="PH-GRAM_GEM"/>
    <property type="match status" value="1"/>
</dbReference>
<dbReference type="Gene3D" id="2.30.29.30">
    <property type="entry name" value="Pleckstrin-homology domain (PH domain)/Phosphotyrosine-binding domain (PTB)"/>
    <property type="match status" value="1"/>
</dbReference>
<dbReference type="InterPro" id="IPR037848">
    <property type="entry name" value="GEM-like"/>
</dbReference>
<dbReference type="InterPro" id="IPR004182">
    <property type="entry name" value="GRAM"/>
</dbReference>
<dbReference type="InterPro" id="IPR011993">
    <property type="entry name" value="PH-like_dom_sf"/>
</dbReference>
<dbReference type="PANTHER" id="PTHR31969">
    <property type="entry name" value="GEM-LIKE PROTEIN 2"/>
    <property type="match status" value="1"/>
</dbReference>
<dbReference type="Pfam" id="PF02893">
    <property type="entry name" value="GRAM"/>
    <property type="match status" value="1"/>
</dbReference>
<dbReference type="SMART" id="SM00568">
    <property type="entry name" value="GRAM"/>
    <property type="match status" value="1"/>
</dbReference>
<accession>Q9FMW4</accession>
<sequence length="219" mass="24550">MTLSRVHQQLITFPAVKTSPAGYLPDPASINKLQIPTSSKFSFLTGKGKSMLRKKKNDSFTNGVRDQDKLGPKLTETVKRKLSLGARILQMGGLEKIYKRLFKVSDEEKLFKAYQCYLSTTAGPIAGLLFISSKKIAFCSERSIKVASPQGELNRVHYKVSIPLCKINGVNQSQNTTKPSQKYLEVVTVDGFDFWFMGFLSYQKAFNCLEQALSLSFKQ</sequence>
<feature type="chain" id="PRO_0000311672" description="Putative GEM-like protein 8">
    <location>
        <begin position="1"/>
        <end position="219"/>
    </location>
</feature>
<feature type="domain" description="GRAM">
    <location>
        <begin position="96"/>
        <end position="174"/>
    </location>
</feature>
<protein>
    <recommendedName>
        <fullName>Putative GEM-like protein 8</fullName>
    </recommendedName>
</protein>